<dbReference type="EMBL" id="AM286415">
    <property type="protein sequence ID" value="CAL10811.1"/>
    <property type="molecule type" value="Genomic_DNA"/>
</dbReference>
<dbReference type="RefSeq" id="YP_001005051.1">
    <property type="nucleotide sequence ID" value="NC_008800.1"/>
</dbReference>
<dbReference type="SMR" id="A1JJM4"/>
<dbReference type="KEGG" id="yen:YE0706"/>
<dbReference type="PATRIC" id="fig|393305.7.peg.800"/>
<dbReference type="eggNOG" id="COG3112">
    <property type="taxonomic scope" value="Bacteria"/>
</dbReference>
<dbReference type="HOGENOM" id="CLU_139226_0_0_6"/>
<dbReference type="OrthoDB" id="5739292at2"/>
<dbReference type="Proteomes" id="UP000000642">
    <property type="component" value="Chromosome"/>
</dbReference>
<dbReference type="HAMAP" id="MF_01053">
    <property type="entry name" value="UPF0231"/>
    <property type="match status" value="1"/>
</dbReference>
<dbReference type="InterPro" id="IPR008249">
    <property type="entry name" value="UPF0231"/>
</dbReference>
<dbReference type="NCBIfam" id="NF003574">
    <property type="entry name" value="PRK05248.1-1"/>
    <property type="match status" value="1"/>
</dbReference>
<dbReference type="NCBIfam" id="NF003576">
    <property type="entry name" value="PRK05248.1-3"/>
    <property type="match status" value="1"/>
</dbReference>
<dbReference type="Pfam" id="PF06062">
    <property type="entry name" value="UPF0231"/>
    <property type="match status" value="1"/>
</dbReference>
<dbReference type="PIRSF" id="PIRSF006287">
    <property type="entry name" value="UCP006287"/>
    <property type="match status" value="1"/>
</dbReference>
<proteinExistence type="inferred from homology"/>
<reference key="1">
    <citation type="journal article" date="2006" name="PLoS Genet.">
        <title>The complete genome sequence and comparative genome analysis of the high pathogenicity Yersinia enterocolitica strain 8081.</title>
        <authorList>
            <person name="Thomson N.R."/>
            <person name="Howard S."/>
            <person name="Wren B.W."/>
            <person name="Holden M.T.G."/>
            <person name="Crossman L."/>
            <person name="Challis G.L."/>
            <person name="Churcher C."/>
            <person name="Mungall K."/>
            <person name="Brooks K."/>
            <person name="Chillingworth T."/>
            <person name="Feltwell T."/>
            <person name="Abdellah Z."/>
            <person name="Hauser H."/>
            <person name="Jagels K."/>
            <person name="Maddison M."/>
            <person name="Moule S."/>
            <person name="Sanders M."/>
            <person name="Whitehead S."/>
            <person name="Quail M.A."/>
            <person name="Dougan G."/>
            <person name="Parkhill J."/>
            <person name="Prentice M.B."/>
        </authorList>
    </citation>
    <scope>NUCLEOTIDE SEQUENCE [LARGE SCALE GENOMIC DNA]</scope>
    <source>
        <strain>NCTC 13174 / 8081</strain>
    </source>
</reference>
<gene>
    <name type="ordered locus">YE0706</name>
</gene>
<evidence type="ECO:0000255" key="1">
    <source>
        <dbReference type="HAMAP-Rule" id="MF_01053"/>
    </source>
</evidence>
<comment type="similarity">
    <text evidence="1">Belongs to the UPF0231 family.</text>
</comment>
<protein>
    <recommendedName>
        <fullName evidence="1">UPF0231 protein YE0706</fullName>
    </recommendedName>
</protein>
<sequence length="120" mass="13951">MDYEFLRDLTGQVLVRFSMGHEVIGHWLNEEIKGDLAKLDQIEAAAAEVKGSERQWQLDGHEYTLWLDGEEVMVRANQLDIEGDEMEEGMNYYDEESLCLCGLEDFLRVLQGYRNFIISK</sequence>
<feature type="chain" id="PRO_1000064374" description="UPF0231 protein YE0706">
    <location>
        <begin position="1"/>
        <end position="120"/>
    </location>
</feature>
<name>Y706_YERE8</name>
<organism>
    <name type="scientific">Yersinia enterocolitica serotype O:8 / biotype 1B (strain NCTC 13174 / 8081)</name>
    <dbReference type="NCBI Taxonomy" id="393305"/>
    <lineage>
        <taxon>Bacteria</taxon>
        <taxon>Pseudomonadati</taxon>
        <taxon>Pseudomonadota</taxon>
        <taxon>Gammaproteobacteria</taxon>
        <taxon>Enterobacterales</taxon>
        <taxon>Yersiniaceae</taxon>
        <taxon>Yersinia</taxon>
    </lineage>
</organism>
<accession>A1JJM4</accession>